<name>CIAO1_DROYA</name>
<dbReference type="EMBL" id="CM000158">
    <property type="protein sequence ID" value="EDW91079.1"/>
    <property type="molecule type" value="Genomic_DNA"/>
</dbReference>
<dbReference type="SMR" id="B4P7Q3"/>
<dbReference type="EnsemblMetazoa" id="FBtr0258798">
    <property type="protein sequence ID" value="FBpp0257290"/>
    <property type="gene ID" value="FBgn0230036"/>
</dbReference>
<dbReference type="EnsemblMetazoa" id="XM_002091331.4">
    <property type="protein sequence ID" value="XP_002091367.1"/>
    <property type="gene ID" value="LOC6530451"/>
</dbReference>
<dbReference type="GeneID" id="6530451"/>
<dbReference type="KEGG" id="dya:Dyak_GE12280"/>
<dbReference type="CTD" id="9391"/>
<dbReference type="eggNOG" id="KOG0645">
    <property type="taxonomic scope" value="Eukaryota"/>
</dbReference>
<dbReference type="HOGENOM" id="CLU_000288_57_8_1"/>
<dbReference type="OMA" id="IREIRWS"/>
<dbReference type="OrthoDB" id="284782at2759"/>
<dbReference type="PhylomeDB" id="B4P7Q3"/>
<dbReference type="Proteomes" id="UP000002282">
    <property type="component" value="Chromosome 2R"/>
</dbReference>
<dbReference type="GO" id="GO:0097361">
    <property type="term" value="C:cytosolic [4Fe-4S] assembly targeting complex"/>
    <property type="evidence" value="ECO:0007669"/>
    <property type="project" value="EnsemblMetazoa"/>
</dbReference>
<dbReference type="GO" id="GO:1902695">
    <property type="term" value="C:metallochaperone complex"/>
    <property type="evidence" value="ECO:0007669"/>
    <property type="project" value="EnsemblMetazoa"/>
</dbReference>
<dbReference type="GO" id="GO:0016226">
    <property type="term" value="P:iron-sulfur cluster assembly"/>
    <property type="evidence" value="ECO:0007669"/>
    <property type="project" value="UniProtKB-UniRule"/>
</dbReference>
<dbReference type="GO" id="GO:0051604">
    <property type="term" value="P:protein maturation"/>
    <property type="evidence" value="ECO:0000250"/>
    <property type="project" value="UniProtKB"/>
</dbReference>
<dbReference type="CDD" id="cd00200">
    <property type="entry name" value="WD40"/>
    <property type="match status" value="1"/>
</dbReference>
<dbReference type="FunFam" id="2.130.10.10:FF:000136">
    <property type="entry name" value="Probable cytosolic iron-sulfur protein assembly protein CIAO1"/>
    <property type="match status" value="1"/>
</dbReference>
<dbReference type="Gene3D" id="2.130.10.10">
    <property type="entry name" value="YVTN repeat-like/Quinoprotein amine dehydrogenase"/>
    <property type="match status" value="1"/>
</dbReference>
<dbReference type="HAMAP" id="MF_03037">
    <property type="entry name" value="ciao1"/>
    <property type="match status" value="1"/>
</dbReference>
<dbReference type="InterPro" id="IPR028608">
    <property type="entry name" value="CIAO1/Cia1"/>
</dbReference>
<dbReference type="InterPro" id="IPR020472">
    <property type="entry name" value="G-protein_beta_WD-40_rep"/>
</dbReference>
<dbReference type="InterPro" id="IPR015943">
    <property type="entry name" value="WD40/YVTN_repeat-like_dom_sf"/>
</dbReference>
<dbReference type="InterPro" id="IPR019775">
    <property type="entry name" value="WD40_repeat_CS"/>
</dbReference>
<dbReference type="InterPro" id="IPR036322">
    <property type="entry name" value="WD40_repeat_dom_sf"/>
</dbReference>
<dbReference type="InterPro" id="IPR001680">
    <property type="entry name" value="WD40_rpt"/>
</dbReference>
<dbReference type="PANTHER" id="PTHR19920:SF0">
    <property type="entry name" value="CYTOSOLIC IRON-SULFUR PROTEIN ASSEMBLY PROTEIN CIAO1-RELATED"/>
    <property type="match status" value="1"/>
</dbReference>
<dbReference type="PANTHER" id="PTHR19920">
    <property type="entry name" value="WD40 PROTEIN CIAO1"/>
    <property type="match status" value="1"/>
</dbReference>
<dbReference type="Pfam" id="PF00400">
    <property type="entry name" value="WD40"/>
    <property type="match status" value="7"/>
</dbReference>
<dbReference type="PRINTS" id="PR00320">
    <property type="entry name" value="GPROTEINBRPT"/>
</dbReference>
<dbReference type="SMART" id="SM00320">
    <property type="entry name" value="WD40"/>
    <property type="match status" value="7"/>
</dbReference>
<dbReference type="SUPFAM" id="SSF50978">
    <property type="entry name" value="WD40 repeat-like"/>
    <property type="match status" value="1"/>
</dbReference>
<dbReference type="PROSITE" id="PS00678">
    <property type="entry name" value="WD_REPEATS_1"/>
    <property type="match status" value="1"/>
</dbReference>
<dbReference type="PROSITE" id="PS50082">
    <property type="entry name" value="WD_REPEATS_2"/>
    <property type="match status" value="6"/>
</dbReference>
<dbReference type="PROSITE" id="PS50294">
    <property type="entry name" value="WD_REPEATS_REGION"/>
    <property type="match status" value="1"/>
</dbReference>
<gene>
    <name evidence="1" type="primary">Ciao1</name>
    <name type="ORF">GE12280</name>
</gene>
<keyword id="KW-0677">Repeat</keyword>
<keyword id="KW-0853">WD repeat</keyword>
<protein>
    <recommendedName>
        <fullName evidence="1">Probable cytosolic iron-sulfur protein assembly protein Ciao1</fullName>
    </recommendedName>
</protein>
<reference key="1">
    <citation type="journal article" date="2007" name="Nature">
        <title>Evolution of genes and genomes on the Drosophila phylogeny.</title>
        <authorList>
            <consortium name="Drosophila 12 genomes consortium"/>
        </authorList>
    </citation>
    <scope>NUCLEOTIDE SEQUENCE [LARGE SCALE GENOMIC DNA]</scope>
    <source>
        <strain>Tai18E2 / Tucson 14021-0261.01</strain>
    </source>
</reference>
<evidence type="ECO:0000255" key="1">
    <source>
        <dbReference type="HAMAP-Rule" id="MF_03037"/>
    </source>
</evidence>
<feature type="chain" id="PRO_0000382494" description="Probable cytosolic iron-sulfur protein assembly protein Ciao1">
    <location>
        <begin position="1"/>
        <end position="335"/>
    </location>
</feature>
<feature type="repeat" description="WD 1">
    <location>
        <begin position="12"/>
        <end position="51"/>
    </location>
</feature>
<feature type="repeat" description="WD 2">
    <location>
        <begin position="57"/>
        <end position="96"/>
    </location>
</feature>
<feature type="repeat" description="WD 3">
    <location>
        <begin position="101"/>
        <end position="140"/>
    </location>
</feature>
<feature type="repeat" description="WD 4">
    <location>
        <begin position="146"/>
        <end position="185"/>
    </location>
</feature>
<feature type="repeat" description="WD 5">
    <location>
        <begin position="192"/>
        <end position="231"/>
    </location>
</feature>
<feature type="repeat" description="WD 6">
    <location>
        <begin position="250"/>
        <end position="289"/>
    </location>
</feature>
<feature type="repeat" description="WD 7">
    <location>
        <begin position="301"/>
        <end position="335"/>
    </location>
</feature>
<comment type="function">
    <text evidence="1">Essential component of the cytosolic iron-sulfur (Fe/S) protein assembly machinery. Required for the maturation of extramitochondrial Fe/S proteins.</text>
</comment>
<comment type="similarity">
    <text evidence="1">Belongs to the WD repeat CIA1 family.</text>
</comment>
<proteinExistence type="inferred from homology"/>
<accession>B4P7Q3</accession>
<organism>
    <name type="scientific">Drosophila yakuba</name>
    <name type="common">Fruit fly</name>
    <dbReference type="NCBI Taxonomy" id="7245"/>
    <lineage>
        <taxon>Eukaryota</taxon>
        <taxon>Metazoa</taxon>
        <taxon>Ecdysozoa</taxon>
        <taxon>Arthropoda</taxon>
        <taxon>Hexapoda</taxon>
        <taxon>Insecta</taxon>
        <taxon>Pterygota</taxon>
        <taxon>Neoptera</taxon>
        <taxon>Endopterygota</taxon>
        <taxon>Diptera</taxon>
        <taxon>Brachycera</taxon>
        <taxon>Muscomorpha</taxon>
        <taxon>Ephydroidea</taxon>
        <taxon>Drosophilidae</taxon>
        <taxon>Drosophila</taxon>
        <taxon>Sophophora</taxon>
    </lineage>
</organism>
<sequence>MGRLILEHTLQGHKGRIWGVAWHPKGNVFASCGEDKAIRIWSLTGNTWSTKTILSDGHKRTIREIQWSPCGQYLASASFDATTAIWSKSSGEFECNATLEGHENEVKSVSWSRSGGLLATCSRDKSVWIWEVAGDDEFECAAVLNSHTQDVKRVVWHPTKEILASASYDNTIKMYAEEPIDNDWDCTATLTSHTSTIWGIDFDADGERLVSCSDDTTVKIWRAYHPGNSAGVATPDQQTVWKCVCTLSGQHSRAIYDVSWCKLTGLIATACGDDGIRIFKETSDSKPDEPTFEQLTAEESAHDQDVNSVQWNPVVAGQLISCSDDGTIKIWKVTE</sequence>